<name>RR7_COFAR</name>
<comment type="function">
    <text evidence="1">One of the primary rRNA binding proteins, it binds directly to 16S rRNA where it nucleates assembly of the head domain of the 30S subunit.</text>
</comment>
<comment type="subunit">
    <text>Part of the 30S ribosomal subunit.</text>
</comment>
<comment type="subcellular location">
    <subcellularLocation>
        <location>Plastid</location>
        <location>Chloroplast</location>
    </subcellularLocation>
</comment>
<comment type="similarity">
    <text evidence="3">Belongs to the universal ribosomal protein uS7 family.</text>
</comment>
<proteinExistence type="inferred from homology"/>
<keyword id="KW-0150">Chloroplast</keyword>
<keyword id="KW-0934">Plastid</keyword>
<keyword id="KW-1185">Reference proteome</keyword>
<keyword id="KW-0687">Ribonucleoprotein</keyword>
<keyword id="KW-0689">Ribosomal protein</keyword>
<keyword id="KW-0694">RNA-binding</keyword>
<keyword id="KW-0699">rRNA-binding</keyword>
<evidence type="ECO:0000250" key="1"/>
<evidence type="ECO:0000255" key="2">
    <source>
        <dbReference type="HAMAP-Rule" id="MF_00480"/>
    </source>
</evidence>
<evidence type="ECO:0000305" key="3"/>
<gene>
    <name type="primary">rps7-A</name>
</gene>
<gene>
    <name type="primary">rps7-B</name>
</gene>
<dbReference type="EMBL" id="EF044213">
    <property type="protein sequence ID" value="ABJ89724.1"/>
    <property type="molecule type" value="Genomic_DNA"/>
</dbReference>
<dbReference type="EMBL" id="EF044213">
    <property type="protein sequence ID" value="ABJ89739.1"/>
    <property type="molecule type" value="Genomic_DNA"/>
</dbReference>
<dbReference type="SMR" id="A0A381"/>
<dbReference type="OrthoDB" id="35139at2759"/>
<dbReference type="Proteomes" id="UP000515148">
    <property type="component" value="Unplaced"/>
</dbReference>
<dbReference type="GO" id="GO:0009507">
    <property type="term" value="C:chloroplast"/>
    <property type="evidence" value="ECO:0007669"/>
    <property type="project" value="UniProtKB-SubCell"/>
</dbReference>
<dbReference type="GO" id="GO:0015935">
    <property type="term" value="C:small ribosomal subunit"/>
    <property type="evidence" value="ECO:0007669"/>
    <property type="project" value="InterPro"/>
</dbReference>
<dbReference type="GO" id="GO:0019843">
    <property type="term" value="F:rRNA binding"/>
    <property type="evidence" value="ECO:0007669"/>
    <property type="project" value="UniProtKB-UniRule"/>
</dbReference>
<dbReference type="GO" id="GO:0003735">
    <property type="term" value="F:structural constituent of ribosome"/>
    <property type="evidence" value="ECO:0007669"/>
    <property type="project" value="InterPro"/>
</dbReference>
<dbReference type="GO" id="GO:0006412">
    <property type="term" value="P:translation"/>
    <property type="evidence" value="ECO:0007669"/>
    <property type="project" value="UniProtKB-UniRule"/>
</dbReference>
<dbReference type="CDD" id="cd14871">
    <property type="entry name" value="uS7_Chloroplast"/>
    <property type="match status" value="1"/>
</dbReference>
<dbReference type="FunFam" id="1.10.455.10:FF:000001">
    <property type="entry name" value="30S ribosomal protein S7"/>
    <property type="match status" value="1"/>
</dbReference>
<dbReference type="Gene3D" id="1.10.455.10">
    <property type="entry name" value="Ribosomal protein S7 domain"/>
    <property type="match status" value="1"/>
</dbReference>
<dbReference type="HAMAP" id="MF_00480_B">
    <property type="entry name" value="Ribosomal_uS7_B"/>
    <property type="match status" value="1"/>
</dbReference>
<dbReference type="InterPro" id="IPR000235">
    <property type="entry name" value="Ribosomal_uS7"/>
</dbReference>
<dbReference type="InterPro" id="IPR005717">
    <property type="entry name" value="Ribosomal_uS7_bac/org-type"/>
</dbReference>
<dbReference type="InterPro" id="IPR020606">
    <property type="entry name" value="Ribosomal_uS7_CS"/>
</dbReference>
<dbReference type="InterPro" id="IPR023798">
    <property type="entry name" value="Ribosomal_uS7_dom"/>
</dbReference>
<dbReference type="InterPro" id="IPR036823">
    <property type="entry name" value="Ribosomal_uS7_dom_sf"/>
</dbReference>
<dbReference type="NCBIfam" id="TIGR01029">
    <property type="entry name" value="rpsG_bact"/>
    <property type="match status" value="1"/>
</dbReference>
<dbReference type="PANTHER" id="PTHR11205">
    <property type="entry name" value="RIBOSOMAL PROTEIN S7"/>
    <property type="match status" value="1"/>
</dbReference>
<dbReference type="Pfam" id="PF00177">
    <property type="entry name" value="Ribosomal_S7"/>
    <property type="match status" value="1"/>
</dbReference>
<dbReference type="PIRSF" id="PIRSF002122">
    <property type="entry name" value="RPS7p_RPS7a_RPS5e_RPS7o"/>
    <property type="match status" value="1"/>
</dbReference>
<dbReference type="SUPFAM" id="SSF47973">
    <property type="entry name" value="Ribosomal protein S7"/>
    <property type="match status" value="1"/>
</dbReference>
<dbReference type="PROSITE" id="PS00052">
    <property type="entry name" value="RIBOSOMAL_S7"/>
    <property type="match status" value="1"/>
</dbReference>
<sequence length="155" mass="17357">MSRRGAAEEKTAKSDPIYRNRLVNMLVNRILKHGKKSLAYQIIYRAVKKIQQKTETNPLSVLRQAIRGVTPDITVKARRVGGSTHQVPIEIGSTQGKALAIRWLLAASRKRPGRNMAFKLSSELVDAAKGSGDAIRKKEETHRMAEANRAFAHFR</sequence>
<geneLocation type="chloroplast"/>
<organism>
    <name type="scientific">Coffea arabica</name>
    <name type="common">Arabian coffee</name>
    <dbReference type="NCBI Taxonomy" id="13443"/>
    <lineage>
        <taxon>Eukaryota</taxon>
        <taxon>Viridiplantae</taxon>
        <taxon>Streptophyta</taxon>
        <taxon>Embryophyta</taxon>
        <taxon>Tracheophyta</taxon>
        <taxon>Spermatophyta</taxon>
        <taxon>Magnoliopsida</taxon>
        <taxon>eudicotyledons</taxon>
        <taxon>Gunneridae</taxon>
        <taxon>Pentapetalae</taxon>
        <taxon>asterids</taxon>
        <taxon>lamiids</taxon>
        <taxon>Gentianales</taxon>
        <taxon>Rubiaceae</taxon>
        <taxon>Ixoroideae</taxon>
        <taxon>Gardenieae complex</taxon>
        <taxon>Bertiereae - Coffeeae clade</taxon>
        <taxon>Coffeeae</taxon>
        <taxon>Coffea</taxon>
    </lineage>
</organism>
<accession>A0A381</accession>
<feature type="chain" id="PRO_0000277035" description="Small ribosomal subunit protein uS7cz/uS7cy">
    <location>
        <begin position="1"/>
        <end position="155"/>
    </location>
</feature>
<reference key="1">
    <citation type="journal article" date="2007" name="Plant Biotechnol. J.">
        <title>The complete nucleotide sequence of the coffee (Coffea arabica L.) chloroplast genome: organization and implications for biotechnology and phylogenetic relationships amongst angiosperms.</title>
        <authorList>
            <person name="Samson N."/>
            <person name="Bausher M.G."/>
            <person name="Lee S.-B."/>
            <person name="Jansen R.K."/>
            <person name="Daniell H."/>
        </authorList>
    </citation>
    <scope>NUCLEOTIDE SEQUENCE [LARGE SCALE GENOMIC DNA]</scope>
</reference>
<protein>
    <recommendedName>
        <fullName evidence="2">Small ribosomal subunit protein uS7cz/uS7cy</fullName>
    </recommendedName>
    <alternativeName>
        <fullName>30S ribosomal protein S7, chloroplastic</fullName>
    </alternativeName>
</protein>